<reference key="1">
    <citation type="journal article" date="1998" name="Nature">
        <title>Deciphering the biology of Mycobacterium tuberculosis from the complete genome sequence.</title>
        <authorList>
            <person name="Cole S.T."/>
            <person name="Brosch R."/>
            <person name="Parkhill J."/>
            <person name="Garnier T."/>
            <person name="Churcher C.M."/>
            <person name="Harris D.E."/>
            <person name="Gordon S.V."/>
            <person name="Eiglmeier K."/>
            <person name="Gas S."/>
            <person name="Barry C.E. III"/>
            <person name="Tekaia F."/>
            <person name="Badcock K."/>
            <person name="Basham D."/>
            <person name="Brown D."/>
            <person name="Chillingworth T."/>
            <person name="Connor R."/>
            <person name="Davies R.M."/>
            <person name="Devlin K."/>
            <person name="Feltwell T."/>
            <person name="Gentles S."/>
            <person name="Hamlin N."/>
            <person name="Holroyd S."/>
            <person name="Hornsby T."/>
            <person name="Jagels K."/>
            <person name="Krogh A."/>
            <person name="McLean J."/>
            <person name="Moule S."/>
            <person name="Murphy L.D."/>
            <person name="Oliver S."/>
            <person name="Osborne J."/>
            <person name="Quail M.A."/>
            <person name="Rajandream M.A."/>
            <person name="Rogers J."/>
            <person name="Rutter S."/>
            <person name="Seeger K."/>
            <person name="Skelton S."/>
            <person name="Squares S."/>
            <person name="Squares R."/>
            <person name="Sulston J.E."/>
            <person name="Taylor K."/>
            <person name="Whitehead S."/>
            <person name="Barrell B.G."/>
        </authorList>
    </citation>
    <scope>NUCLEOTIDE SEQUENCE [LARGE SCALE GENOMIC DNA]</scope>
    <source>
        <strain>ATCC 25618 / H37Rv</strain>
    </source>
</reference>
<reference key="2">
    <citation type="journal article" date="2010" name="FEMS Microbiol. Lett.">
        <title>Mycobacterium tuberculosis Rv1302 and Mycobacterium smegmatis MSMEG_4947 have WecA function and MSMEG_4947 is required for the growth of M. smegmatis.</title>
        <authorList>
            <person name="Jin Y."/>
            <person name="Xin Y."/>
            <person name="Zhang W."/>
            <person name="Ma Y."/>
        </authorList>
    </citation>
    <scope>FUNCTION</scope>
    <scope>CATALYTIC ACTIVITY</scope>
</reference>
<reference key="3">
    <citation type="journal article" date="2011" name="Mol. Cell. Proteomics">
        <title>Proteogenomic analysis of Mycobacterium tuberculosis by high resolution mass spectrometry.</title>
        <authorList>
            <person name="Kelkar D.S."/>
            <person name="Kumar D."/>
            <person name="Kumar P."/>
            <person name="Balakrishnan L."/>
            <person name="Muthusamy B."/>
            <person name="Yadav A.K."/>
            <person name="Shrivastava P."/>
            <person name="Marimuthu A."/>
            <person name="Anand S."/>
            <person name="Sundaram H."/>
            <person name="Kingsbury R."/>
            <person name="Harsha H.C."/>
            <person name="Nair B."/>
            <person name="Prasad T.S."/>
            <person name="Chauhan D.S."/>
            <person name="Katoch K."/>
            <person name="Katoch V.M."/>
            <person name="Kumar P."/>
            <person name="Chaerkady R."/>
            <person name="Ramachandran S."/>
            <person name="Dash D."/>
            <person name="Pandey A."/>
        </authorList>
    </citation>
    <scope>IDENTIFICATION BY MASS SPECTROMETRY [LARGE SCALE ANALYSIS]</scope>
    <source>
        <strain>ATCC 25618 / H37Rv</strain>
    </source>
</reference>
<comment type="function">
    <text evidence="3">Involved in the biosynthesis of the disaccharide D-N-acetylglucosamine-L-rhamnose which plays an important role in the mycobacterial cell wall as a linker connecting arabinogalactan and peptidoglycan via a phosphodiester linkage. Catalyzes the transfer of the N-acetylglucosamine-1-phosphate (GlcNAc-1P) moiety from UDP-GlcNAc onto the carrier lipid decaprenyl phosphate (C50-P), yielding GlcNAc-pyrophosphoryl-decaprenyl (GlcNAc-PP-C50).</text>
</comment>
<comment type="catalytic activity">
    <reaction evidence="3">
        <text>trans,octa-cis-decaprenyl phosphate + UDP-N-acetyl-alpha-D-glucosamine = N-acetyl-alpha-D-glucosaminyl-1-diphospho-trans,octa-cis-decaprenol + UMP</text>
        <dbReference type="Rhea" id="RHEA:34071"/>
        <dbReference type="ChEBI" id="CHEBI:57705"/>
        <dbReference type="ChEBI" id="CHEBI:57865"/>
        <dbReference type="ChEBI" id="CHEBI:65079"/>
        <dbReference type="ChEBI" id="CHEBI:65080"/>
        <dbReference type="EC" id="2.7.8.35"/>
    </reaction>
</comment>
<comment type="cofactor">
    <cofactor evidence="1">
        <name>Mg(2+)</name>
        <dbReference type="ChEBI" id="CHEBI:18420"/>
    </cofactor>
</comment>
<comment type="cofactor">
    <cofactor evidence="1">
        <name>Mn(2+)</name>
        <dbReference type="ChEBI" id="CHEBI:29035"/>
    </cofactor>
</comment>
<comment type="pathway">
    <text>Cell wall biogenesis; cell wall polysaccharide biosynthesis.</text>
</comment>
<comment type="subcellular location">
    <subcellularLocation>
        <location evidence="1">Cell membrane</location>
        <topology evidence="1">Multi-pass membrane protein</topology>
    </subcellularLocation>
</comment>
<comment type="miscellaneous">
    <text evidence="1">Mycobacteria use decaprenyl phosphate (C50-P) as a lipid carrier in all known cell wall biosynthetic pathways, rather than the usual undecaprenyl phosphate (C55-P) usually used in Gram-negative bacteria.</text>
</comment>
<comment type="similarity">
    <text evidence="4">Belongs to the glycosyltransferase 4 family. WecA subfamily.</text>
</comment>
<organism>
    <name type="scientific">Mycobacterium tuberculosis (strain ATCC 25618 / H37Rv)</name>
    <dbReference type="NCBI Taxonomy" id="83332"/>
    <lineage>
        <taxon>Bacteria</taxon>
        <taxon>Bacillati</taxon>
        <taxon>Actinomycetota</taxon>
        <taxon>Actinomycetes</taxon>
        <taxon>Mycobacteriales</taxon>
        <taxon>Mycobacteriaceae</taxon>
        <taxon>Mycobacterium</taxon>
        <taxon>Mycobacterium tuberculosis complex</taxon>
    </lineage>
</organism>
<sequence length="404" mass="42257">MQYGLEVSSDVAGVAGGLLALSYRGAGVPLRELALVGLTAAIITYFATGPVRMLASRLGAVAYPRERDVHVTPTPRMGGLAMFLGIVGAVFLASQLPALTRGFVYSTGMPAVLVAGAVIMGIGLIDDRWGLDALTKFAGQITAASVLVTMGVAWSVLYIPVGGVGTIVLDQASSILLTLALTVSIVNAMNFVDGLDGLAAGLGLITALAICMFSVGLLRDHGGDVLYYPPAVISVVLAGACLGFLPHNFHRAKIFMGDSGSMLIGLMLAAASTTAAGPISQNAYGARDVFALLSPFLLVVAVMFVPMLDLLLAIVRRTRAGRSAFSPDKMHLHHRLLQIGHSHRRVVLIIYLWVGIVAFGAASSIFFNPRDTAAVMLGAIVVAGVATLIPLLRRGDDYYDPDLD</sequence>
<accession>P9WMW5</accession>
<accession>L0T8Z6</accession>
<accession>Q10606</accession>
<keyword id="KW-1003">Cell membrane</keyword>
<keyword id="KW-0961">Cell wall biogenesis/degradation</keyword>
<keyword id="KW-0328">Glycosyltransferase</keyword>
<keyword id="KW-0460">Magnesium</keyword>
<keyword id="KW-0464">Manganese</keyword>
<keyword id="KW-0472">Membrane</keyword>
<keyword id="KW-1185">Reference proteome</keyword>
<keyword id="KW-0808">Transferase</keyword>
<keyword id="KW-0812">Transmembrane</keyword>
<keyword id="KW-1133">Transmembrane helix</keyword>
<dbReference type="EC" id="2.7.8.35"/>
<dbReference type="EMBL" id="AL123456">
    <property type="protein sequence ID" value="CCP44059.1"/>
    <property type="molecule type" value="Genomic_DNA"/>
</dbReference>
<dbReference type="PIR" id="B70774">
    <property type="entry name" value="B70774"/>
</dbReference>
<dbReference type="RefSeq" id="NP_215818.1">
    <property type="nucleotide sequence ID" value="NC_000962.3"/>
</dbReference>
<dbReference type="RefSeq" id="WP_003898816.1">
    <property type="nucleotide sequence ID" value="NZ_NVQJ01000030.1"/>
</dbReference>
<dbReference type="SMR" id="P9WMW5"/>
<dbReference type="FunCoup" id="P9WMW5">
    <property type="interactions" value="26"/>
</dbReference>
<dbReference type="STRING" id="83332.Rv1302"/>
<dbReference type="BindingDB" id="P9WMW5"/>
<dbReference type="PaxDb" id="83332-Rv1302"/>
<dbReference type="DNASU" id="886947"/>
<dbReference type="GeneID" id="45425276"/>
<dbReference type="GeneID" id="886947"/>
<dbReference type="KEGG" id="mtu:Rv1302"/>
<dbReference type="KEGG" id="mtv:RVBD_1302"/>
<dbReference type="PATRIC" id="fig|83332.111.peg.1455"/>
<dbReference type="TubercuList" id="Rv1302"/>
<dbReference type="eggNOG" id="COG0472">
    <property type="taxonomic scope" value="Bacteria"/>
</dbReference>
<dbReference type="InParanoid" id="P9WMW5"/>
<dbReference type="OrthoDB" id="9783652at2"/>
<dbReference type="PhylomeDB" id="P9WMW5"/>
<dbReference type="BioCyc" id="MetaCyc:G185E-5476-MONOMER"/>
<dbReference type="BRENDA" id="2.7.8.35">
    <property type="organism ID" value="3445"/>
</dbReference>
<dbReference type="UniPathway" id="UPA00963"/>
<dbReference type="Proteomes" id="UP000001584">
    <property type="component" value="Chromosome"/>
</dbReference>
<dbReference type="GO" id="GO:0005886">
    <property type="term" value="C:plasma membrane"/>
    <property type="evidence" value="ECO:0007005"/>
    <property type="project" value="MTBBASE"/>
</dbReference>
<dbReference type="GO" id="GO:0016757">
    <property type="term" value="F:glycosyltransferase activity"/>
    <property type="evidence" value="ECO:0007669"/>
    <property type="project" value="UniProtKB-KW"/>
</dbReference>
<dbReference type="GO" id="GO:0000287">
    <property type="term" value="F:magnesium ion binding"/>
    <property type="evidence" value="ECO:0000250"/>
    <property type="project" value="UniProtKB"/>
</dbReference>
<dbReference type="GO" id="GO:0030145">
    <property type="term" value="F:manganese ion binding"/>
    <property type="evidence" value="ECO:0000250"/>
    <property type="project" value="UniProtKB"/>
</dbReference>
<dbReference type="GO" id="GO:0016780">
    <property type="term" value="F:phosphotransferase activity, for other substituted phosphate groups"/>
    <property type="evidence" value="ECO:0000314"/>
    <property type="project" value="MTBBASE"/>
</dbReference>
<dbReference type="GO" id="GO:0045227">
    <property type="term" value="P:capsule polysaccharide biosynthetic process"/>
    <property type="evidence" value="ECO:0007669"/>
    <property type="project" value="UniProtKB-UniPathway"/>
</dbReference>
<dbReference type="GO" id="GO:0044038">
    <property type="term" value="P:cell wall macromolecule biosynthetic process"/>
    <property type="evidence" value="ECO:0000250"/>
    <property type="project" value="UniProtKB"/>
</dbReference>
<dbReference type="GO" id="GO:0071555">
    <property type="term" value="P:cell wall organization"/>
    <property type="evidence" value="ECO:0000250"/>
    <property type="project" value="UniProtKB"/>
</dbReference>
<dbReference type="GO" id="GO:0009103">
    <property type="term" value="P:lipopolysaccharide biosynthetic process"/>
    <property type="evidence" value="ECO:0000318"/>
    <property type="project" value="GO_Central"/>
</dbReference>
<dbReference type="CDD" id="cd06853">
    <property type="entry name" value="GT_WecA_like"/>
    <property type="match status" value="1"/>
</dbReference>
<dbReference type="InterPro" id="IPR000715">
    <property type="entry name" value="Glycosyl_transferase_4"/>
</dbReference>
<dbReference type="PANTHER" id="PTHR22926">
    <property type="entry name" value="PHOSPHO-N-ACETYLMURAMOYL-PENTAPEPTIDE-TRANSFERASE"/>
    <property type="match status" value="1"/>
</dbReference>
<dbReference type="PANTHER" id="PTHR22926:SF3">
    <property type="entry name" value="UNDECAPRENYL-PHOSPHATE ALPHA-N-ACETYLGLUCOSAMINYL 1-PHOSPHATE TRANSFERASE"/>
    <property type="match status" value="1"/>
</dbReference>
<dbReference type="Pfam" id="PF00953">
    <property type="entry name" value="Glycos_transf_4"/>
    <property type="match status" value="1"/>
</dbReference>
<evidence type="ECO:0000250" key="1"/>
<evidence type="ECO:0000255" key="2"/>
<evidence type="ECO:0000269" key="3">
    <source>
    </source>
</evidence>
<evidence type="ECO:0000305" key="4"/>
<feature type="chain" id="PRO_0000108951" description="Decaprenyl-phosphate N-acetylglucosaminephosphotransferase">
    <location>
        <begin position="1"/>
        <end position="404"/>
    </location>
</feature>
<feature type="transmembrane region" description="Helical" evidence="2">
    <location>
        <begin position="33"/>
        <end position="53"/>
    </location>
</feature>
<feature type="transmembrane region" description="Helical" evidence="2">
    <location>
        <begin position="79"/>
        <end position="99"/>
    </location>
</feature>
<feature type="transmembrane region" description="Helical" evidence="2">
    <location>
        <begin position="105"/>
        <end position="125"/>
    </location>
</feature>
<feature type="transmembrane region" description="Helical" evidence="2">
    <location>
        <begin position="148"/>
        <end position="168"/>
    </location>
</feature>
<feature type="transmembrane region" description="Helical" evidence="2">
    <location>
        <begin position="175"/>
        <end position="195"/>
    </location>
</feature>
<feature type="transmembrane region" description="Helical" evidence="2">
    <location>
        <begin position="198"/>
        <end position="218"/>
    </location>
</feature>
<feature type="transmembrane region" description="Helical" evidence="2">
    <location>
        <begin position="225"/>
        <end position="245"/>
    </location>
</feature>
<feature type="transmembrane region" description="Helical" evidence="2">
    <location>
        <begin position="259"/>
        <end position="279"/>
    </location>
</feature>
<feature type="transmembrane region" description="Helical" evidence="2">
    <location>
        <begin position="295"/>
        <end position="315"/>
    </location>
</feature>
<feature type="transmembrane region" description="Helical" evidence="2">
    <location>
        <begin position="347"/>
        <end position="367"/>
    </location>
</feature>
<feature type="transmembrane region" description="Helical" evidence="2">
    <location>
        <begin position="372"/>
        <end position="392"/>
    </location>
</feature>
<feature type="site" description="Important in orienting the substrate" evidence="1">
    <location>
        <position position="126"/>
    </location>
</feature>
<feature type="site" description="Important in orienting the substrate; probably interacts with magnesium or manganese" evidence="1">
    <location>
        <position position="127"/>
    </location>
</feature>
<feature type="site" description="Could be required for catalysis" evidence="1">
    <location>
        <position position="193"/>
    </location>
</feature>
<feature type="site" description="Could be required for catalysis" evidence="1">
    <location>
        <position position="196"/>
    </location>
</feature>
<name>WECA_MYCTU</name>
<gene>
    <name type="primary">wecA</name>
    <name type="synonym">rfe</name>
    <name type="ordered locus">Rv1302</name>
    <name type="ORF">MTCY373.22</name>
</gene>
<proteinExistence type="evidence at protein level"/>
<protein>
    <recommendedName>
        <fullName>Decaprenyl-phosphate N-acetylglucosaminephosphotransferase</fullName>
        <ecNumber>2.7.8.35</ecNumber>
    </recommendedName>
    <alternativeName>
        <fullName>Decaprenyl-phosphate GlcNAc-1-phosphate transferase</fullName>
    </alternativeName>
    <alternativeName>
        <fullName>Decaprenyl-phosphate alpha-N-acetylglucosaminyl 1-phosphate transferase</fullName>
    </alternativeName>
    <alternativeName>
        <fullName>UDP-GlcNAc:decaprenyl-phosphate GlcNAc-1-phosphate transferase</fullName>
    </alternativeName>
</protein>